<name>Y1998_STRPI</name>
<organism>
    <name type="scientific">Streptococcus pneumoniae (strain Hungary19A-6)</name>
    <dbReference type="NCBI Taxonomy" id="487214"/>
    <lineage>
        <taxon>Bacteria</taxon>
        <taxon>Bacillati</taxon>
        <taxon>Bacillota</taxon>
        <taxon>Bacilli</taxon>
        <taxon>Lactobacillales</taxon>
        <taxon>Streptococcaceae</taxon>
        <taxon>Streptococcus</taxon>
    </lineage>
</organism>
<keyword id="KW-1003">Cell membrane</keyword>
<keyword id="KW-0472">Membrane</keyword>
<keyword id="KW-0812">Transmembrane</keyword>
<keyword id="KW-1133">Transmembrane helix</keyword>
<evidence type="ECO:0000255" key="1">
    <source>
        <dbReference type="HAMAP-Rule" id="MF_00363"/>
    </source>
</evidence>
<proteinExistence type="inferred from homology"/>
<comment type="subcellular location">
    <subcellularLocation>
        <location evidence="1">Cell membrane</location>
        <topology evidence="1">Single-pass membrane protein</topology>
    </subcellularLocation>
</comment>
<comment type="similarity">
    <text evidence="1">Belongs to the UPF0154 family.</text>
</comment>
<protein>
    <recommendedName>
        <fullName evidence="1">UPF0154 protein SPH_1998</fullName>
    </recommendedName>
</protein>
<feature type="chain" id="PRO_1000121049" description="UPF0154 protein SPH_1998">
    <location>
        <begin position="1"/>
        <end position="82"/>
    </location>
</feature>
<feature type="transmembrane region" description="Helical" evidence="1">
    <location>
        <begin position="5"/>
        <end position="25"/>
    </location>
</feature>
<dbReference type="EMBL" id="CP000936">
    <property type="protein sequence ID" value="ACA35638.1"/>
    <property type="molecule type" value="Genomic_DNA"/>
</dbReference>
<dbReference type="RefSeq" id="WP_000364990.1">
    <property type="nucleotide sequence ID" value="NC_010380.1"/>
</dbReference>
<dbReference type="SMR" id="B1I892"/>
<dbReference type="KEGG" id="spv:SPH_1998"/>
<dbReference type="HOGENOM" id="CLU_180108_0_0_9"/>
<dbReference type="Proteomes" id="UP000002163">
    <property type="component" value="Chromosome"/>
</dbReference>
<dbReference type="GO" id="GO:0005886">
    <property type="term" value="C:plasma membrane"/>
    <property type="evidence" value="ECO:0007669"/>
    <property type="project" value="UniProtKB-SubCell"/>
</dbReference>
<dbReference type="HAMAP" id="MF_00363">
    <property type="entry name" value="UPF0154"/>
    <property type="match status" value="1"/>
</dbReference>
<dbReference type="InterPro" id="IPR005359">
    <property type="entry name" value="UPF0154"/>
</dbReference>
<dbReference type="Pfam" id="PF03672">
    <property type="entry name" value="UPF0154"/>
    <property type="match status" value="1"/>
</dbReference>
<accession>B1I892</accession>
<gene>
    <name type="ordered locus">SPH_1998</name>
</gene>
<reference key="1">
    <citation type="journal article" date="2010" name="Genome Biol.">
        <title>Structure and dynamics of the pan-genome of Streptococcus pneumoniae and closely related species.</title>
        <authorList>
            <person name="Donati C."/>
            <person name="Hiller N.L."/>
            <person name="Tettelin H."/>
            <person name="Muzzi A."/>
            <person name="Croucher N.J."/>
            <person name="Angiuoli S.V."/>
            <person name="Oggioni M."/>
            <person name="Dunning Hotopp J.C."/>
            <person name="Hu F.Z."/>
            <person name="Riley D.R."/>
            <person name="Covacci A."/>
            <person name="Mitchell T.J."/>
            <person name="Bentley S.D."/>
            <person name="Kilian M."/>
            <person name="Ehrlich G.D."/>
            <person name="Rappuoli R."/>
            <person name="Moxon E.R."/>
            <person name="Masignani V."/>
        </authorList>
    </citation>
    <scope>NUCLEOTIDE SEQUENCE [LARGE SCALE GENOMIC DNA]</scope>
    <source>
        <strain>Hungary19A-6</strain>
    </source>
</reference>
<sequence length="82" mass="9086">MDLLLAIVLIVLAFLGGALGGMYLVRKQIEKEFADNPRLNAEAVRTLLSANGQKPSEAKVQQVYHQIIRQQKAALANNKKKK</sequence>